<gene>
    <name evidence="2" type="primary">lysA</name>
    <name type="ordered locus">SCO6438</name>
    <name type="ORF">SC9B5.05</name>
</gene>
<comment type="function">
    <text evidence="2">Specifically catalyzes the decarboxylation of meso-diaminopimelate (meso-DAP) to L-lysine.</text>
</comment>
<comment type="catalytic activity">
    <reaction evidence="2">
        <text>meso-2,6-diaminopimelate + H(+) = L-lysine + CO2</text>
        <dbReference type="Rhea" id="RHEA:15101"/>
        <dbReference type="ChEBI" id="CHEBI:15378"/>
        <dbReference type="ChEBI" id="CHEBI:16526"/>
        <dbReference type="ChEBI" id="CHEBI:32551"/>
        <dbReference type="ChEBI" id="CHEBI:57791"/>
        <dbReference type="EC" id="4.1.1.20"/>
    </reaction>
</comment>
<comment type="cofactor">
    <cofactor evidence="2">
        <name>pyridoxal 5'-phosphate</name>
        <dbReference type="ChEBI" id="CHEBI:597326"/>
    </cofactor>
</comment>
<comment type="pathway">
    <text evidence="2">Amino-acid biosynthesis; L-lysine biosynthesis via DAP pathway; L-lysine from DL-2,6-diaminopimelate: step 1/1.</text>
</comment>
<comment type="subunit">
    <text evidence="2">Homodimer.</text>
</comment>
<comment type="similarity">
    <text evidence="2">Belongs to the Orn/Lys/Arg decarboxylase class-II family. LysA subfamily.</text>
</comment>
<keyword id="KW-0028">Amino-acid biosynthesis</keyword>
<keyword id="KW-0210">Decarboxylase</keyword>
<keyword id="KW-0456">Lyase</keyword>
<keyword id="KW-0457">Lysine biosynthesis</keyword>
<keyword id="KW-0663">Pyridoxal phosphate</keyword>
<keyword id="KW-1185">Reference proteome</keyword>
<protein>
    <recommendedName>
        <fullName evidence="2">Diaminopimelate decarboxylase</fullName>
        <shortName evidence="2">DAP decarboxylase</shortName>
        <shortName evidence="2">DAPDC</shortName>
        <ecNumber evidence="2">4.1.1.20</ecNumber>
    </recommendedName>
</protein>
<accession>Q9ZBH5</accession>
<organism>
    <name type="scientific">Streptomyces coelicolor (strain ATCC BAA-471 / A3(2) / M145)</name>
    <dbReference type="NCBI Taxonomy" id="100226"/>
    <lineage>
        <taxon>Bacteria</taxon>
        <taxon>Bacillati</taxon>
        <taxon>Actinomycetota</taxon>
        <taxon>Actinomycetes</taxon>
        <taxon>Kitasatosporales</taxon>
        <taxon>Streptomycetaceae</taxon>
        <taxon>Streptomyces</taxon>
        <taxon>Streptomyces albidoflavus group</taxon>
    </lineage>
</organism>
<sequence>MTSPSAPSSAERPRLPGALDGPRLAAAAAEHGTPLWLYDAATIRAQIDRLRRFDVIRYAQKACSNLHILRLMREEGVHVDAVSEGEIERALAAGYRVGGDDEPIVFTADLLNRSTLRRVVELGIPVNAGSPQMLDQVGRAAPGHPVWIRINPGFGHGHSRKTNTGGEHSKHGIWHEHLEESLALVDRHGLDLVGLHMHIGSGVDYGHLESVCETMVKQVRMAGRDIRAISAGGGLSVPYTPGDPEIDTDRYFELWDAARRELVSELGHPVRLEIEPGRFLVAGAGVLAAEVRAQKPVGSNYFVLVDAGFNDLMRPAMYGSNHRVSVLDADGAPRASDARDTVLAGPLCESGDVFTQVEGGDVEPVPVPRTDVGDLVVFHDTGAYGASMSSTYNSRPLIPEVLVDGAETRLIRRRQTVAELLAPELEPGPALSPRPSRDPR</sequence>
<feature type="chain" id="PRO_0000149935" description="Diaminopimelate decarboxylase">
    <location>
        <begin position="1"/>
        <end position="440"/>
    </location>
</feature>
<feature type="region of interest" description="Disordered" evidence="3">
    <location>
        <begin position="421"/>
        <end position="440"/>
    </location>
</feature>
<feature type="compositionally biased region" description="Low complexity" evidence="3">
    <location>
        <begin position="421"/>
        <end position="431"/>
    </location>
</feature>
<feature type="active site" description="Proton donor" evidence="1">
    <location>
        <position position="348"/>
    </location>
</feature>
<feature type="binding site" evidence="2">
    <location>
        <position position="234"/>
    </location>
    <ligand>
        <name>pyridoxal 5'-phosphate</name>
        <dbReference type="ChEBI" id="CHEBI:597326"/>
    </ligand>
</feature>
<feature type="binding site" evidence="2">
    <location>
        <begin position="275"/>
        <end position="278"/>
    </location>
    <ligand>
        <name>pyridoxal 5'-phosphate</name>
        <dbReference type="ChEBI" id="CHEBI:597326"/>
    </ligand>
</feature>
<feature type="binding site" evidence="2">
    <location>
        <position position="278"/>
    </location>
    <ligand>
        <name>substrate</name>
    </ligand>
</feature>
<feature type="binding site" evidence="2">
    <location>
        <position position="314"/>
    </location>
    <ligand>
        <name>substrate</name>
    </ligand>
</feature>
<feature type="binding site" evidence="2">
    <location>
        <position position="318"/>
    </location>
    <ligand>
        <name>substrate</name>
    </ligand>
</feature>
<feature type="binding site" evidence="2">
    <location>
        <position position="349"/>
    </location>
    <ligand>
        <name>substrate</name>
    </ligand>
</feature>
<feature type="binding site" evidence="2">
    <location>
        <position position="384"/>
    </location>
    <ligand>
        <name>pyridoxal 5'-phosphate</name>
        <dbReference type="ChEBI" id="CHEBI:597326"/>
    </ligand>
</feature>
<feature type="binding site" evidence="2">
    <location>
        <position position="384"/>
    </location>
    <ligand>
        <name>substrate</name>
    </ligand>
</feature>
<feature type="modified residue" description="N6-(pyridoxal phosphate)lysine" evidence="2">
    <location>
        <position position="61"/>
    </location>
</feature>
<evidence type="ECO:0000255" key="1"/>
<evidence type="ECO:0000255" key="2">
    <source>
        <dbReference type="HAMAP-Rule" id="MF_02120"/>
    </source>
</evidence>
<evidence type="ECO:0000256" key="3">
    <source>
        <dbReference type="SAM" id="MobiDB-lite"/>
    </source>
</evidence>
<dbReference type="EC" id="4.1.1.20" evidence="2"/>
<dbReference type="EMBL" id="AL939127">
    <property type="protein sequence ID" value="CAA22747.1"/>
    <property type="molecule type" value="Genomic_DNA"/>
</dbReference>
<dbReference type="PIR" id="T35925">
    <property type="entry name" value="T35925"/>
</dbReference>
<dbReference type="RefSeq" id="NP_630523.1">
    <property type="nucleotide sequence ID" value="NC_003888.3"/>
</dbReference>
<dbReference type="RefSeq" id="WP_011030919.1">
    <property type="nucleotide sequence ID" value="NZ_VNID01000002.1"/>
</dbReference>
<dbReference type="SMR" id="Q9ZBH5"/>
<dbReference type="STRING" id="100226.gene:17764095"/>
<dbReference type="PaxDb" id="100226-SCO6438"/>
<dbReference type="KEGG" id="sco:SCO6438"/>
<dbReference type="PATRIC" id="fig|100226.15.peg.6538"/>
<dbReference type="eggNOG" id="COG0019">
    <property type="taxonomic scope" value="Bacteria"/>
</dbReference>
<dbReference type="HOGENOM" id="CLU_026444_0_2_11"/>
<dbReference type="InParanoid" id="Q9ZBH5"/>
<dbReference type="OrthoDB" id="9802241at2"/>
<dbReference type="PhylomeDB" id="Q9ZBH5"/>
<dbReference type="UniPathway" id="UPA00034">
    <property type="reaction ID" value="UER00027"/>
</dbReference>
<dbReference type="Proteomes" id="UP000001973">
    <property type="component" value="Chromosome"/>
</dbReference>
<dbReference type="GO" id="GO:0008836">
    <property type="term" value="F:diaminopimelate decarboxylase activity"/>
    <property type="evidence" value="ECO:0000318"/>
    <property type="project" value="GO_Central"/>
</dbReference>
<dbReference type="GO" id="GO:0030170">
    <property type="term" value="F:pyridoxal phosphate binding"/>
    <property type="evidence" value="ECO:0007669"/>
    <property type="project" value="UniProtKB-UniRule"/>
</dbReference>
<dbReference type="GO" id="GO:0009089">
    <property type="term" value="P:lysine biosynthetic process via diaminopimelate"/>
    <property type="evidence" value="ECO:0000318"/>
    <property type="project" value="GO_Central"/>
</dbReference>
<dbReference type="CDD" id="cd06828">
    <property type="entry name" value="PLPDE_III_DapDC"/>
    <property type="match status" value="1"/>
</dbReference>
<dbReference type="Gene3D" id="3.20.20.10">
    <property type="entry name" value="Alanine racemase"/>
    <property type="match status" value="1"/>
</dbReference>
<dbReference type="Gene3D" id="2.40.37.10">
    <property type="entry name" value="Lyase, Ornithine Decarboxylase, Chain A, domain 1"/>
    <property type="match status" value="1"/>
</dbReference>
<dbReference type="HAMAP" id="MF_02120">
    <property type="entry name" value="LysA"/>
    <property type="match status" value="1"/>
</dbReference>
<dbReference type="InterPro" id="IPR009006">
    <property type="entry name" value="Ala_racemase/Decarboxylase_C"/>
</dbReference>
<dbReference type="InterPro" id="IPR002986">
    <property type="entry name" value="DAP_deCOOHase_LysA"/>
</dbReference>
<dbReference type="InterPro" id="IPR022643">
    <property type="entry name" value="De-COase2_C"/>
</dbReference>
<dbReference type="InterPro" id="IPR022657">
    <property type="entry name" value="De-COase2_CS"/>
</dbReference>
<dbReference type="InterPro" id="IPR022644">
    <property type="entry name" value="De-COase2_N"/>
</dbReference>
<dbReference type="InterPro" id="IPR022653">
    <property type="entry name" value="De-COase2_pyr-phos_BS"/>
</dbReference>
<dbReference type="InterPro" id="IPR000183">
    <property type="entry name" value="Orn/DAP/Arg_de-COase"/>
</dbReference>
<dbReference type="InterPro" id="IPR029066">
    <property type="entry name" value="PLP-binding_barrel"/>
</dbReference>
<dbReference type="NCBIfam" id="TIGR01048">
    <property type="entry name" value="lysA"/>
    <property type="match status" value="1"/>
</dbReference>
<dbReference type="PANTHER" id="PTHR43727">
    <property type="entry name" value="DIAMINOPIMELATE DECARBOXYLASE"/>
    <property type="match status" value="1"/>
</dbReference>
<dbReference type="PANTHER" id="PTHR43727:SF2">
    <property type="entry name" value="GROUP IV DECARBOXYLASE"/>
    <property type="match status" value="1"/>
</dbReference>
<dbReference type="Pfam" id="PF02784">
    <property type="entry name" value="Orn_Arg_deC_N"/>
    <property type="match status" value="1"/>
</dbReference>
<dbReference type="Pfam" id="PF00278">
    <property type="entry name" value="Orn_DAP_Arg_deC"/>
    <property type="match status" value="1"/>
</dbReference>
<dbReference type="PRINTS" id="PR01181">
    <property type="entry name" value="DAPDCRBXLASE"/>
</dbReference>
<dbReference type="PRINTS" id="PR01179">
    <property type="entry name" value="ODADCRBXLASE"/>
</dbReference>
<dbReference type="SUPFAM" id="SSF50621">
    <property type="entry name" value="Alanine racemase C-terminal domain-like"/>
    <property type="match status" value="1"/>
</dbReference>
<dbReference type="SUPFAM" id="SSF51419">
    <property type="entry name" value="PLP-binding barrel"/>
    <property type="match status" value="1"/>
</dbReference>
<dbReference type="PROSITE" id="PS00878">
    <property type="entry name" value="ODR_DC_2_1"/>
    <property type="match status" value="1"/>
</dbReference>
<dbReference type="PROSITE" id="PS00879">
    <property type="entry name" value="ODR_DC_2_2"/>
    <property type="match status" value="1"/>
</dbReference>
<name>DCDA_STRCO</name>
<proteinExistence type="inferred from homology"/>
<reference key="1">
    <citation type="journal article" date="2002" name="Nature">
        <title>Complete genome sequence of the model actinomycete Streptomyces coelicolor A3(2).</title>
        <authorList>
            <person name="Bentley S.D."/>
            <person name="Chater K.F."/>
            <person name="Cerdeno-Tarraga A.-M."/>
            <person name="Challis G.L."/>
            <person name="Thomson N.R."/>
            <person name="James K.D."/>
            <person name="Harris D.E."/>
            <person name="Quail M.A."/>
            <person name="Kieser H."/>
            <person name="Harper D."/>
            <person name="Bateman A."/>
            <person name="Brown S."/>
            <person name="Chandra G."/>
            <person name="Chen C.W."/>
            <person name="Collins M."/>
            <person name="Cronin A."/>
            <person name="Fraser A."/>
            <person name="Goble A."/>
            <person name="Hidalgo J."/>
            <person name="Hornsby T."/>
            <person name="Howarth S."/>
            <person name="Huang C.-H."/>
            <person name="Kieser T."/>
            <person name="Larke L."/>
            <person name="Murphy L.D."/>
            <person name="Oliver K."/>
            <person name="O'Neil S."/>
            <person name="Rabbinowitsch E."/>
            <person name="Rajandream M.A."/>
            <person name="Rutherford K.M."/>
            <person name="Rutter S."/>
            <person name="Seeger K."/>
            <person name="Saunders D."/>
            <person name="Sharp S."/>
            <person name="Squares R."/>
            <person name="Squares S."/>
            <person name="Taylor K."/>
            <person name="Warren T."/>
            <person name="Wietzorrek A."/>
            <person name="Woodward J.R."/>
            <person name="Barrell B.G."/>
            <person name="Parkhill J."/>
            <person name="Hopwood D.A."/>
        </authorList>
    </citation>
    <scope>NUCLEOTIDE SEQUENCE [LARGE SCALE GENOMIC DNA]</scope>
    <source>
        <strain>ATCC BAA-471 / A3(2) / M145</strain>
    </source>
</reference>